<accession>A8C8X0</accession>
<gene>
    <name evidence="2" type="primary">PA</name>
</gene>
<feature type="chain" id="PRO_0000373004" description="Polymerase acidic protein">
    <location>
        <begin position="1"/>
        <end position="716"/>
    </location>
</feature>
<feature type="short sequence motif" description="Nuclear localization signal 1 (NLS1)" evidence="1 2">
    <location>
        <begin position="124"/>
        <end position="139"/>
    </location>
</feature>
<feature type="short sequence motif" description="Nuclear localization signal 2 (NLS2)" evidence="1 2">
    <location>
        <begin position="184"/>
        <end position="247"/>
    </location>
</feature>
<feature type="binding site" evidence="2">
    <location>
        <position position="41"/>
    </location>
    <ligand>
        <name>Mn(2+)</name>
        <dbReference type="ChEBI" id="CHEBI:29035"/>
        <label>1</label>
    </ligand>
</feature>
<feature type="binding site" evidence="2">
    <location>
        <position position="80"/>
    </location>
    <ligand>
        <name>Mn(2+)</name>
        <dbReference type="ChEBI" id="CHEBI:29035"/>
        <label>2</label>
    </ligand>
</feature>
<feature type="binding site" evidence="2">
    <location>
        <position position="108"/>
    </location>
    <ligand>
        <name>Mn(2+)</name>
        <dbReference type="ChEBI" id="CHEBI:29035"/>
        <label>1</label>
    </ligand>
</feature>
<feature type="binding site" evidence="2">
    <location>
        <position position="108"/>
    </location>
    <ligand>
        <name>Mn(2+)</name>
        <dbReference type="ChEBI" id="CHEBI:29035"/>
        <label>2</label>
    </ligand>
</feature>
<feature type="binding site" evidence="2">
    <location>
        <position position="119"/>
    </location>
    <ligand>
        <name>Mn(2+)</name>
        <dbReference type="ChEBI" id="CHEBI:29035"/>
        <label>1</label>
    </ligand>
</feature>
<feature type="binding site" evidence="2">
    <location>
        <position position="120"/>
    </location>
    <ligand>
        <name>Mn(2+)</name>
        <dbReference type="ChEBI" id="CHEBI:29035"/>
        <label>1</label>
    </ligand>
</feature>
<sequence>MEDFVRQCFNPMIVELAEKTMKEYGENPKIETNKFAAICTHMEVCFMYSDFHFINERGESIIVEPGDSNALLKHRFEIIEGRDRNMAWTVVNSICNTTGVGKPRFLPDLYDYKEDRFIEIGVTRREIHIYYLEKANKIKSEETHIHIFSFTGEEMATKADYTLDEESRARIKTRLFTIRQEMASRGLWDSFRQSERGEETIEERFEITGTMRRLADQSLPPNFSSLDNFRAYVDGFEPNGYIEGKLSQMSREVNARIEPFLKTTPRPLRLPCGPPCFQRSKFLLMDALKLNIEDPSHEGEGIPLYDAVRCMKTFFGWKEPTIVKPHEKGINSNYLLAWKQVLAEIQDIEDEKKIPRIKNMKKTSPLKWALGENMAPEKVDFDDCKDVSDLKQYDSDEPEFRSLASWIQNEFNKACELTDSSWLELDEIGEDVAPIEHIASMRRNYFTAEVSHCRATEYIMKGVYINTALLNASCAAMDDFQLIPMISKCRTKEGRRKTNLYGFIIKGRSHLRNDTDVVNFVSMEFSLTDPRLEPHKWEKYCILEIGDMVLRTAIGQVARPMFLYVRTNGTSKIKMKWGMEMRRCLLQSLQQIESMIEAESSVKEKDMTKEFFENKSETWPIGESPKGVEEGSIGKVCRTLLAKSVFNCLYASPQLEGFSAESRKLLLIVQALRDNLEPGTFDLGGLYESIEECLINDPWVLLNASWFNSFLTHALR</sequence>
<protein>
    <recommendedName>
        <fullName evidence="2">Polymerase acidic protein</fullName>
        <ecNumber evidence="2">3.1.-.-</ecNumber>
    </recommendedName>
    <alternativeName>
        <fullName evidence="2">RNA-directed RNA polymerase subunit P2</fullName>
    </alternativeName>
</protein>
<evidence type="ECO:0000250" key="1">
    <source>
        <dbReference type="UniProtKB" id="P03433"/>
    </source>
</evidence>
<evidence type="ECO:0000255" key="2">
    <source>
        <dbReference type="HAMAP-Rule" id="MF_04063"/>
    </source>
</evidence>
<name>PA_I67A2</name>
<organismHost>
    <name type="scientific">Aves</name>
    <dbReference type="NCBI Taxonomy" id="8782"/>
</organismHost>
<organismHost>
    <name type="scientific">Homo sapiens</name>
    <name type="common">Human</name>
    <dbReference type="NCBI Taxonomy" id="9606"/>
</organismHost>
<organismHost>
    <name type="scientific">Sus scrofa</name>
    <name type="common">Pig</name>
    <dbReference type="NCBI Taxonomy" id="9823"/>
</organismHost>
<organism>
    <name type="scientific">Influenza A virus (strain A/Swine/Wisconsin/1/1967 H1N1)</name>
    <dbReference type="NCBI Taxonomy" id="382855"/>
    <lineage>
        <taxon>Viruses</taxon>
        <taxon>Riboviria</taxon>
        <taxon>Orthornavirae</taxon>
        <taxon>Negarnaviricota</taxon>
        <taxon>Polyploviricotina</taxon>
        <taxon>Insthoviricetes</taxon>
        <taxon>Articulavirales</taxon>
        <taxon>Orthomyxoviridae</taxon>
        <taxon>Alphainfluenzavirus</taxon>
        <taxon>Alphainfluenzavirus influenzae</taxon>
        <taxon>Influenza A virus</taxon>
    </lineage>
</organism>
<keyword id="KW-1157">Cap snatching</keyword>
<keyword id="KW-0255">Endonuclease</keyword>
<keyword id="KW-1262">Eukaryotic host gene expression shutoff by virus</keyword>
<keyword id="KW-1191">Eukaryotic host transcription shutoff by virus</keyword>
<keyword id="KW-1035">Host cytoplasm</keyword>
<keyword id="KW-1190">Host gene expression shutoff by virus</keyword>
<keyword id="KW-1048">Host nucleus</keyword>
<keyword id="KW-0945">Host-virus interaction</keyword>
<keyword id="KW-0378">Hydrolase</keyword>
<keyword id="KW-1104">Inhibition of host RNA polymerase II by virus</keyword>
<keyword id="KW-0464">Manganese</keyword>
<keyword id="KW-0479">Metal-binding</keyword>
<keyword id="KW-0540">Nuclease</keyword>
<keyword id="KW-0597">Phosphoprotein</keyword>
<keyword id="KW-0688">Ribosomal frameshifting</keyword>
<proteinExistence type="inferred from homology"/>
<reference key="1">
    <citation type="submission" date="2007-10" db="EMBL/GenBank/DDBJ databases">
        <title>The NIAID influenza genome sequencing project.</title>
        <authorList>
            <person name="Ghedin E."/>
            <person name="Spiro D."/>
            <person name="Miller N."/>
            <person name="Zaborsky J."/>
            <person name="Feldblyum T."/>
            <person name="Subbu V."/>
            <person name="Shumway M."/>
            <person name="Sparenborg J."/>
            <person name="Groveman L."/>
            <person name="Halpin R."/>
            <person name="Sitz J."/>
            <person name="Koo H."/>
            <person name="Salzberg S.L."/>
            <person name="Webster R.G."/>
            <person name="Hoffmann E."/>
            <person name="Krauss S."/>
            <person name="Naeve C."/>
            <person name="Bao Y."/>
            <person name="Bolotov P."/>
            <person name="Dernovoy D."/>
            <person name="Kiryutin B."/>
            <person name="Lipman D.J."/>
            <person name="Tatusova T."/>
        </authorList>
    </citation>
    <scope>NUCLEOTIDE SEQUENCE [GENOMIC RNA]</scope>
</reference>
<reference key="2">
    <citation type="submission" date="2007-10" db="EMBL/GenBank/DDBJ databases">
        <authorList>
            <consortium name="The NIAID Influenza Genome Sequencing Consortium"/>
        </authorList>
    </citation>
    <scope>NUCLEOTIDE SEQUENCE [GENOMIC RNA]</scope>
</reference>
<comment type="function">
    <text evidence="2">Plays an essential role in viral RNA transcription and replication by forming the heterotrimeric polymerase complex together with PB1 and PB2 subunits. The complex transcribes viral mRNAs by using a unique mechanism called cap-snatching. It consists in the hijacking and cleavage of host capped pre-mRNAs. These short capped RNAs are then used as primers for viral mRNAs. The PB2 subunit is responsible for the binding of the 5' cap of cellular pre-mRNAs which are subsequently cleaved after 10-13 nucleotides by the PA subunit that carries the endonuclease activity.</text>
</comment>
<comment type="cofactor">
    <cofactor evidence="2">
        <name>Mn(2+)</name>
        <dbReference type="ChEBI" id="CHEBI:29035"/>
    </cofactor>
    <text evidence="2">Binds 2 manganese ions per subunit.</text>
</comment>
<comment type="subunit">
    <text evidence="1 2">Influenza RNA polymerase is composed of three subunits: PB1, PB2 and PA. Interacts (via C-terminus) with PB1 (via N-terminus).</text>
</comment>
<comment type="subcellular location">
    <subcellularLocation>
        <location evidence="2">Host cytoplasm</location>
    </subcellularLocation>
    <subcellularLocation>
        <location evidence="2">Host nucleus</location>
    </subcellularLocation>
    <text evidence="1 2">PB1 and PA are transported in the host nucleus as a complex.</text>
</comment>
<comment type="alternative products">
    <event type="ribosomal frameshifting"/>
    <isoform>
        <id>A8C8X0-1</id>
        <name>PA</name>
        <sequence type="displayed"/>
    </isoform>
    <isoform>
        <id>P0DJV3-1</id>
        <name>PA-X</name>
        <sequence type="external"/>
    </isoform>
</comment>
<comment type="PTM">
    <text evidence="1 2">Phosphorylated on serines and threonines by host kinases, including human casein kinase II.</text>
</comment>
<comment type="similarity">
    <text evidence="2">Belongs to the influenza viruses PA family.</text>
</comment>
<dbReference type="EC" id="3.1.-.-" evidence="2"/>
<dbReference type="EMBL" id="CY026296">
    <property type="protein sequence ID" value="ABV82591.1"/>
    <property type="molecule type" value="Viral_cRNA"/>
</dbReference>
<dbReference type="SMR" id="A8C8X0"/>
<dbReference type="MEROPS" id="S62.001"/>
<dbReference type="Proteomes" id="UP000116872">
    <property type="component" value="Genome"/>
</dbReference>
<dbReference type="GO" id="GO:0030430">
    <property type="term" value="C:host cell cytoplasm"/>
    <property type="evidence" value="ECO:0007669"/>
    <property type="project" value="UniProtKB-SubCell"/>
</dbReference>
<dbReference type="GO" id="GO:0042025">
    <property type="term" value="C:host cell nucleus"/>
    <property type="evidence" value="ECO:0007669"/>
    <property type="project" value="UniProtKB-SubCell"/>
</dbReference>
<dbReference type="GO" id="GO:0004519">
    <property type="term" value="F:endonuclease activity"/>
    <property type="evidence" value="ECO:0007669"/>
    <property type="project" value="UniProtKB-KW"/>
</dbReference>
<dbReference type="GO" id="GO:0046872">
    <property type="term" value="F:metal ion binding"/>
    <property type="evidence" value="ECO:0007669"/>
    <property type="project" value="UniProtKB-KW"/>
</dbReference>
<dbReference type="GO" id="GO:0003723">
    <property type="term" value="F:RNA binding"/>
    <property type="evidence" value="ECO:0007669"/>
    <property type="project" value="UniProtKB-UniRule"/>
</dbReference>
<dbReference type="GO" id="GO:0075526">
    <property type="term" value="P:cap snatching"/>
    <property type="evidence" value="ECO:0007669"/>
    <property type="project" value="UniProtKB-UniRule"/>
</dbReference>
<dbReference type="GO" id="GO:0006351">
    <property type="term" value="P:DNA-templated transcription"/>
    <property type="evidence" value="ECO:0007669"/>
    <property type="project" value="UniProtKB-UniRule"/>
</dbReference>
<dbReference type="GO" id="GO:0039657">
    <property type="term" value="P:symbiont-mediated suppression of host gene expression"/>
    <property type="evidence" value="ECO:0007669"/>
    <property type="project" value="UniProtKB-KW"/>
</dbReference>
<dbReference type="GO" id="GO:0039523">
    <property type="term" value="P:symbiont-mediated suppression of host mRNA transcription via inhibition of RNA polymerase II activity"/>
    <property type="evidence" value="ECO:0007669"/>
    <property type="project" value="UniProtKB-UniRule"/>
</dbReference>
<dbReference type="GO" id="GO:0039694">
    <property type="term" value="P:viral RNA genome replication"/>
    <property type="evidence" value="ECO:0007669"/>
    <property type="project" value="InterPro"/>
</dbReference>
<dbReference type="GO" id="GO:0075523">
    <property type="term" value="P:viral translational frameshifting"/>
    <property type="evidence" value="ECO:0007669"/>
    <property type="project" value="UniProtKB-KW"/>
</dbReference>
<dbReference type="FunFam" id="3.40.91.90:FF:000001">
    <property type="entry name" value="Polymerase acidic protein"/>
    <property type="match status" value="1"/>
</dbReference>
<dbReference type="Gene3D" id="3.40.91.90">
    <property type="entry name" value="Influenza RNA-dependent RNA polymerase subunit PA, endonuclease domain"/>
    <property type="match status" value="1"/>
</dbReference>
<dbReference type="HAMAP" id="MF_04063">
    <property type="entry name" value="INFV_PA"/>
    <property type="match status" value="1"/>
</dbReference>
<dbReference type="InterPro" id="IPR037534">
    <property type="entry name" value="INFV_PA"/>
</dbReference>
<dbReference type="InterPro" id="IPR001009">
    <property type="entry name" value="PA/PA-X"/>
</dbReference>
<dbReference type="InterPro" id="IPR038372">
    <property type="entry name" value="PA/PA-X_sf"/>
</dbReference>
<dbReference type="Pfam" id="PF00603">
    <property type="entry name" value="Flu_PA"/>
    <property type="match status" value="1"/>
</dbReference>